<reference key="1">
    <citation type="journal article" date="2009" name="J. Bacteriol.">
        <title>Genomic sequencing reveals regulatory mutations and recombinational events in the widely used MC4100 lineage of Escherichia coli K-12.</title>
        <authorList>
            <person name="Ferenci T."/>
            <person name="Zhou Z."/>
            <person name="Betteridge T."/>
            <person name="Ren Y."/>
            <person name="Liu Y."/>
            <person name="Feng L."/>
            <person name="Reeves P.R."/>
            <person name="Wang L."/>
        </authorList>
    </citation>
    <scope>NUCLEOTIDE SEQUENCE [LARGE SCALE GENOMIC DNA]</scope>
    <source>
        <strain>K12 / MC4100 / BW2952</strain>
    </source>
</reference>
<organism>
    <name type="scientific">Escherichia coli (strain K12 / MC4100 / BW2952)</name>
    <dbReference type="NCBI Taxonomy" id="595496"/>
    <lineage>
        <taxon>Bacteria</taxon>
        <taxon>Pseudomonadati</taxon>
        <taxon>Pseudomonadota</taxon>
        <taxon>Gammaproteobacteria</taxon>
        <taxon>Enterobacterales</taxon>
        <taxon>Enterobacteriaceae</taxon>
        <taxon>Escherichia</taxon>
    </lineage>
</organism>
<gene>
    <name evidence="1" type="primary">ghrB</name>
    <name type="ordered locus">BWG_3241</name>
</gene>
<feature type="chain" id="PRO_1000215879" description="Glyoxylate/hydroxypyruvate reductase B">
    <location>
        <begin position="1"/>
        <end position="324"/>
    </location>
</feature>
<feature type="active site" evidence="1">
    <location>
        <position position="237"/>
    </location>
</feature>
<feature type="active site" evidence="1">
    <location>
        <position position="266"/>
    </location>
</feature>
<feature type="active site" description="Proton donor" evidence="1">
    <location>
        <position position="285"/>
    </location>
</feature>
<name>GHRB_ECOBW</name>
<protein>
    <recommendedName>
        <fullName evidence="1">Glyoxylate/hydroxypyruvate reductase B</fullName>
        <ecNumber evidence="1">1.1.1.79</ecNumber>
        <ecNumber evidence="1">1.1.1.81</ecNumber>
    </recommendedName>
</protein>
<sequence length="324" mass="35396">MKPSVILYKALPDDLLQRLQEHFTVHQVANLSPQTVEQNAAIFAEAEGLLGSNENVNAALLEKMPKLRATSTISVGYDNFDVDALTARKILLMHTPTVLTETVADTLMALVLSTARRVVEVAERVKAGEWTASIGPDWYGTDVHHKTLGIVGMGRIGMALAQRAHFGFNMPILYNARRHHKEAEERFNARYCDLDTLLQESDFVCLILPLTDETHHLFGAEQFAKMKSSAIFINAGRGPVVDENALIAALQKGEIHAAGLDVFEQEPLSVDSPLLSMANVVAVPHIGSATHETRYGMAACAVDNLIDALQGKVEKNCVNPHVAD</sequence>
<proteinExistence type="inferred from homology"/>
<accession>C4ZXE2</accession>
<keyword id="KW-0963">Cytoplasm</keyword>
<keyword id="KW-0520">NAD</keyword>
<keyword id="KW-0521">NADP</keyword>
<keyword id="KW-0560">Oxidoreductase</keyword>
<dbReference type="EC" id="1.1.1.79" evidence="1"/>
<dbReference type="EC" id="1.1.1.81" evidence="1"/>
<dbReference type="EMBL" id="CP001396">
    <property type="protein sequence ID" value="ACR61772.1"/>
    <property type="molecule type" value="Genomic_DNA"/>
</dbReference>
<dbReference type="RefSeq" id="WP_000805038.1">
    <property type="nucleotide sequence ID" value="NC_012759.1"/>
</dbReference>
<dbReference type="SMR" id="C4ZXE2"/>
<dbReference type="KEGG" id="ebw:BWG_3241"/>
<dbReference type="HOGENOM" id="CLU_019796_1_2_6"/>
<dbReference type="GO" id="GO:0005829">
    <property type="term" value="C:cytosol"/>
    <property type="evidence" value="ECO:0007669"/>
    <property type="project" value="TreeGrafter"/>
</dbReference>
<dbReference type="GO" id="GO:0005886">
    <property type="term" value="C:plasma membrane"/>
    <property type="evidence" value="ECO:0007669"/>
    <property type="project" value="UniProtKB-UniRule"/>
</dbReference>
<dbReference type="GO" id="GO:0030267">
    <property type="term" value="F:glyoxylate reductase (NADPH) activity"/>
    <property type="evidence" value="ECO:0007669"/>
    <property type="project" value="UniProtKB-UniRule"/>
</dbReference>
<dbReference type="GO" id="GO:0008465">
    <property type="term" value="F:hydroxypyruvate reductase (NADH) activity"/>
    <property type="evidence" value="ECO:0007669"/>
    <property type="project" value="RHEA"/>
</dbReference>
<dbReference type="GO" id="GO:0120509">
    <property type="term" value="F:hydroxypyruvate reductase (NADPH) activity"/>
    <property type="evidence" value="ECO:0007669"/>
    <property type="project" value="RHEA"/>
</dbReference>
<dbReference type="GO" id="GO:0051287">
    <property type="term" value="F:NAD binding"/>
    <property type="evidence" value="ECO:0007669"/>
    <property type="project" value="InterPro"/>
</dbReference>
<dbReference type="CDD" id="cd05301">
    <property type="entry name" value="GDH"/>
    <property type="match status" value="1"/>
</dbReference>
<dbReference type="FunFam" id="3.40.50.720:FF:000026">
    <property type="entry name" value="Glyoxylate/hydroxypyruvate reductase B"/>
    <property type="match status" value="1"/>
</dbReference>
<dbReference type="Gene3D" id="3.40.50.720">
    <property type="entry name" value="NAD(P)-binding Rossmann-like Domain"/>
    <property type="match status" value="2"/>
</dbReference>
<dbReference type="HAMAP" id="MF_01667">
    <property type="entry name" value="2_Hacid_dh_C_GhrB"/>
    <property type="match status" value="1"/>
</dbReference>
<dbReference type="InterPro" id="IPR050223">
    <property type="entry name" value="D-isomer_2-hydroxyacid_DH"/>
</dbReference>
<dbReference type="InterPro" id="IPR006139">
    <property type="entry name" value="D-isomer_2_OHA_DH_cat_dom"/>
</dbReference>
<dbReference type="InterPro" id="IPR029753">
    <property type="entry name" value="D-isomer_DH_CS"/>
</dbReference>
<dbReference type="InterPro" id="IPR006140">
    <property type="entry name" value="D-isomer_DH_NAD-bd"/>
</dbReference>
<dbReference type="InterPro" id="IPR023756">
    <property type="entry name" value="Glyo/OHPyrv_Rdtase_B"/>
</dbReference>
<dbReference type="InterPro" id="IPR036291">
    <property type="entry name" value="NAD(P)-bd_dom_sf"/>
</dbReference>
<dbReference type="NCBIfam" id="NF011938">
    <property type="entry name" value="PRK15409.1"/>
    <property type="match status" value="1"/>
</dbReference>
<dbReference type="PANTHER" id="PTHR10996">
    <property type="entry name" value="2-HYDROXYACID DEHYDROGENASE-RELATED"/>
    <property type="match status" value="1"/>
</dbReference>
<dbReference type="PANTHER" id="PTHR10996:SF283">
    <property type="entry name" value="GLYOXYLATE_HYDROXYPYRUVATE REDUCTASE B"/>
    <property type="match status" value="1"/>
</dbReference>
<dbReference type="Pfam" id="PF00389">
    <property type="entry name" value="2-Hacid_dh"/>
    <property type="match status" value="1"/>
</dbReference>
<dbReference type="Pfam" id="PF02826">
    <property type="entry name" value="2-Hacid_dh_C"/>
    <property type="match status" value="1"/>
</dbReference>
<dbReference type="SUPFAM" id="SSF52283">
    <property type="entry name" value="Formate/glycerate dehydrogenase catalytic domain-like"/>
    <property type="match status" value="1"/>
</dbReference>
<dbReference type="SUPFAM" id="SSF51735">
    <property type="entry name" value="NAD(P)-binding Rossmann-fold domains"/>
    <property type="match status" value="1"/>
</dbReference>
<dbReference type="PROSITE" id="PS00670">
    <property type="entry name" value="D_2_HYDROXYACID_DH_2"/>
    <property type="match status" value="1"/>
</dbReference>
<dbReference type="PROSITE" id="PS00671">
    <property type="entry name" value="D_2_HYDROXYACID_DH_3"/>
    <property type="match status" value="1"/>
</dbReference>
<comment type="function">
    <text evidence="1">Catalyzes the NADPH-dependent reduction of glyoxylate and hydroxypyruvate into glycolate and glycerate, respectively.</text>
</comment>
<comment type="catalytic activity">
    <reaction evidence="1">
        <text>glycolate + NADP(+) = glyoxylate + NADPH + H(+)</text>
        <dbReference type="Rhea" id="RHEA:10992"/>
        <dbReference type="ChEBI" id="CHEBI:15378"/>
        <dbReference type="ChEBI" id="CHEBI:29805"/>
        <dbReference type="ChEBI" id="CHEBI:36655"/>
        <dbReference type="ChEBI" id="CHEBI:57783"/>
        <dbReference type="ChEBI" id="CHEBI:58349"/>
        <dbReference type="EC" id="1.1.1.79"/>
    </reaction>
</comment>
<comment type="catalytic activity">
    <reaction evidence="1">
        <text>(R)-glycerate + NAD(+) = 3-hydroxypyruvate + NADH + H(+)</text>
        <dbReference type="Rhea" id="RHEA:17905"/>
        <dbReference type="ChEBI" id="CHEBI:15378"/>
        <dbReference type="ChEBI" id="CHEBI:16659"/>
        <dbReference type="ChEBI" id="CHEBI:17180"/>
        <dbReference type="ChEBI" id="CHEBI:57540"/>
        <dbReference type="ChEBI" id="CHEBI:57945"/>
        <dbReference type="EC" id="1.1.1.81"/>
    </reaction>
</comment>
<comment type="catalytic activity">
    <reaction evidence="1">
        <text>(R)-glycerate + NADP(+) = 3-hydroxypyruvate + NADPH + H(+)</text>
        <dbReference type="Rhea" id="RHEA:18657"/>
        <dbReference type="ChEBI" id="CHEBI:15378"/>
        <dbReference type="ChEBI" id="CHEBI:16659"/>
        <dbReference type="ChEBI" id="CHEBI:17180"/>
        <dbReference type="ChEBI" id="CHEBI:57783"/>
        <dbReference type="ChEBI" id="CHEBI:58349"/>
        <dbReference type="EC" id="1.1.1.81"/>
    </reaction>
</comment>
<comment type="subunit">
    <text evidence="1">Homodimer.</text>
</comment>
<comment type="subcellular location">
    <subcellularLocation>
        <location evidence="1">Cytoplasm</location>
    </subcellularLocation>
</comment>
<comment type="similarity">
    <text evidence="1">Belongs to the D-isomer specific 2-hydroxyacid dehydrogenase family. GhrB subfamily.</text>
</comment>
<evidence type="ECO:0000255" key="1">
    <source>
        <dbReference type="HAMAP-Rule" id="MF_01667"/>
    </source>
</evidence>